<comment type="function">
    <text evidence="4">Peptidyl-alpha-hydroxylglycine alpha-amidating lyase that catalyzes an essential reaction in C-terminal alpha-amidation of peptides. Mediates the dismutation of the unstable peptidyl(2-hydroxyglycine) intermediate to glyoxylate and the corresponding desglycine peptide amide. C-terminal amidation of peptides such as neuropeptides is essential for full biological activity.</text>
</comment>
<comment type="catalytic activity">
    <reaction evidence="4">
        <text>a [peptide]-C-terminal (2S)-2-hydroxyglycine = a [peptide]-C-terminal amide + glyoxylate</text>
        <dbReference type="Rhea" id="RHEA:20924"/>
        <dbReference type="Rhea" id="RHEA-COMP:13485"/>
        <dbReference type="Rhea" id="RHEA-COMP:15321"/>
        <dbReference type="ChEBI" id="CHEBI:36655"/>
        <dbReference type="ChEBI" id="CHEBI:137001"/>
        <dbReference type="ChEBI" id="CHEBI:142768"/>
        <dbReference type="EC" id="4.3.2.5"/>
    </reaction>
    <physiologicalReaction direction="left-to-right" evidence="4">
        <dbReference type="Rhea" id="RHEA:20925"/>
    </physiologicalReaction>
</comment>
<comment type="cofactor">
    <cofactor evidence="1">
        <name>Zn(2+)</name>
        <dbReference type="ChEBI" id="CHEBI:29105"/>
    </cofactor>
</comment>
<comment type="biophysicochemical properties">
    <kinetics>
        <KM evidence="4">45 uM for peptidyl-alpha-hydroxyglycine</KM>
    </kinetics>
</comment>
<comment type="subcellular location">
    <subcellularLocation>
        <location evidence="6">Cell membrane</location>
        <topology evidence="6">Single-pass type I membrane protein</topology>
    </subcellularLocation>
    <text evidence="4">Confined to cell bodies.</text>
</comment>
<comment type="tissue specificity">
    <text evidence="4">Widely expressed. In mature larvae, it is ubiquitously expressed with a low expression in all cells and a stronger expression in a subset of neurons. Colocalizes with neuropeptide proctolin. In adults, weak expression is observed in most neuronal cell bodies and in scattered large cells throughout the protocerebrum and also in the subesophageal neuromeres (at protein level).</text>
</comment>
<comment type="PTM">
    <text evidence="7">N-glycosylated.</text>
</comment>
<comment type="similarity">
    <text evidence="6">Belongs to the peptidyl-alpha-hydroxyglycine alpha-amidating lyase family.</text>
</comment>
<proteinExistence type="evidence at protein level"/>
<evidence type="ECO:0000250" key="1"/>
<evidence type="ECO:0000255" key="2"/>
<evidence type="ECO:0000256" key="3">
    <source>
        <dbReference type="SAM" id="MobiDB-lite"/>
    </source>
</evidence>
<evidence type="ECO:0000269" key="4">
    <source>
    </source>
</evidence>
<evidence type="ECO:0000303" key="5">
    <source>
    </source>
</evidence>
<evidence type="ECO:0000305" key="6"/>
<evidence type="ECO:0000305" key="7">
    <source>
    </source>
</evidence>
<accession>Q9V5E1</accession>
<accession>Q960U4</accession>
<dbReference type="EC" id="4.3.2.5" evidence="4"/>
<dbReference type="EMBL" id="AE013599">
    <property type="protein sequence ID" value="AAF58870.1"/>
    <property type="molecule type" value="Genomic_DNA"/>
</dbReference>
<dbReference type="EMBL" id="AY051842">
    <property type="protein sequence ID" value="AAK93266.1"/>
    <property type="molecule type" value="mRNA"/>
</dbReference>
<dbReference type="RefSeq" id="NP_001137630.2">
    <property type="nucleotide sequence ID" value="NM_001144158.3"/>
</dbReference>
<dbReference type="RefSeq" id="NP_610537.2">
    <property type="nucleotide sequence ID" value="NM_136693.3"/>
</dbReference>
<dbReference type="SMR" id="Q9V5E1"/>
<dbReference type="BioGRID" id="61861">
    <property type="interactions" value="1"/>
</dbReference>
<dbReference type="STRING" id="7227.FBpp0087473"/>
<dbReference type="GlyCosmos" id="Q9V5E1">
    <property type="glycosylation" value="2 sites, No reported glycans"/>
</dbReference>
<dbReference type="GlyGen" id="Q9V5E1">
    <property type="glycosylation" value="3 sites"/>
</dbReference>
<dbReference type="PaxDb" id="7227-FBpp0271777"/>
<dbReference type="DNASU" id="36033"/>
<dbReference type="EnsemblMetazoa" id="FBtr0088385">
    <property type="protein sequence ID" value="FBpp0087473"/>
    <property type="gene ID" value="FBgn0283510"/>
</dbReference>
<dbReference type="EnsemblMetazoa" id="FBtr0339423">
    <property type="protein sequence ID" value="FBpp0308510"/>
    <property type="gene ID" value="FBgn0283510"/>
</dbReference>
<dbReference type="GeneID" id="36033"/>
<dbReference type="KEGG" id="dme:Dmel_CG12130"/>
<dbReference type="UCSC" id="CG12130-RA">
    <property type="organism name" value="d. melanogaster"/>
</dbReference>
<dbReference type="AGR" id="FB:FBgn0283510"/>
<dbReference type="CTD" id="36033"/>
<dbReference type="FlyBase" id="FBgn0283510">
    <property type="gene designation" value="Pal1"/>
</dbReference>
<dbReference type="VEuPathDB" id="VectorBase:FBgn0283510"/>
<dbReference type="eggNOG" id="KOG3567">
    <property type="taxonomic scope" value="Eukaryota"/>
</dbReference>
<dbReference type="GeneTree" id="ENSGT00940000156369"/>
<dbReference type="HOGENOM" id="CLU_037899_4_0_1"/>
<dbReference type="InParanoid" id="Q9V5E1"/>
<dbReference type="OMA" id="KRMRWEA"/>
<dbReference type="OrthoDB" id="10018185at2759"/>
<dbReference type="PhylomeDB" id="Q9V5E1"/>
<dbReference type="BRENDA" id="4.3.2.5">
    <property type="organism ID" value="1994"/>
</dbReference>
<dbReference type="SABIO-RK" id="Q9V5E1"/>
<dbReference type="BioGRID-ORCS" id="36033">
    <property type="hits" value="0 hits in 3 CRISPR screens"/>
</dbReference>
<dbReference type="ChiTaRS" id="sdt">
    <property type="organism name" value="fly"/>
</dbReference>
<dbReference type="GenomeRNAi" id="36033"/>
<dbReference type="PRO" id="PR:Q9V5E1"/>
<dbReference type="Proteomes" id="UP000000803">
    <property type="component" value="Chromosome 2R"/>
</dbReference>
<dbReference type="Bgee" id="FBgn0283510">
    <property type="expression patterns" value="Expressed in fat body cell in male reproductive gland and 167 other cell types or tissues"/>
</dbReference>
<dbReference type="ExpressionAtlas" id="Q9V5E1">
    <property type="expression patterns" value="baseline and differential"/>
</dbReference>
<dbReference type="GO" id="GO:0005576">
    <property type="term" value="C:extracellular region"/>
    <property type="evidence" value="ECO:0000318"/>
    <property type="project" value="GO_Central"/>
</dbReference>
<dbReference type="GO" id="GO:0043025">
    <property type="term" value="C:neuronal cell body"/>
    <property type="evidence" value="ECO:0000314"/>
    <property type="project" value="UniProtKB"/>
</dbReference>
<dbReference type="GO" id="GO:0005886">
    <property type="term" value="C:plasma membrane"/>
    <property type="evidence" value="ECO:0007669"/>
    <property type="project" value="UniProtKB-SubCell"/>
</dbReference>
<dbReference type="GO" id="GO:0046872">
    <property type="term" value="F:metal ion binding"/>
    <property type="evidence" value="ECO:0007669"/>
    <property type="project" value="UniProtKB-KW"/>
</dbReference>
<dbReference type="GO" id="GO:0004598">
    <property type="term" value="F:peptidylamidoglycolate lyase activity"/>
    <property type="evidence" value="ECO:0000314"/>
    <property type="project" value="UniProtKB"/>
</dbReference>
<dbReference type="GO" id="GO:0007619">
    <property type="term" value="P:courtship behavior"/>
    <property type="evidence" value="ECO:0000303"/>
    <property type="project" value="FlyBase"/>
</dbReference>
<dbReference type="GO" id="GO:0006518">
    <property type="term" value="P:peptide metabolic process"/>
    <property type="evidence" value="ECO:0007669"/>
    <property type="project" value="InterPro"/>
</dbReference>
<dbReference type="GO" id="GO:0044719">
    <property type="term" value="P:regulation of imaginal disc-derived wing size"/>
    <property type="evidence" value="ECO:0000315"/>
    <property type="project" value="FlyBase"/>
</dbReference>
<dbReference type="CDD" id="cd14958">
    <property type="entry name" value="NHL_PAL_like"/>
    <property type="match status" value="1"/>
</dbReference>
<dbReference type="FunFam" id="2.120.10.30:FF:000054">
    <property type="entry name" value="Peptidyl-alpha-hydroxyglycine alpha-amidating lyase 1"/>
    <property type="match status" value="1"/>
</dbReference>
<dbReference type="Gene3D" id="2.120.10.30">
    <property type="entry name" value="TolB, C-terminal domain"/>
    <property type="match status" value="1"/>
</dbReference>
<dbReference type="InterPro" id="IPR011042">
    <property type="entry name" value="6-blade_b-propeller_TolB-like"/>
</dbReference>
<dbReference type="InterPro" id="IPR001258">
    <property type="entry name" value="NHL_repeat"/>
</dbReference>
<dbReference type="InterPro" id="IPR000720">
    <property type="entry name" value="PHM/PAL"/>
</dbReference>
<dbReference type="PANTHER" id="PTHR10680:SF36">
    <property type="entry name" value="PEPTIDYL-ALPHA-HYDROXYGLYCINE ALPHA-AMIDATING LYASE 1"/>
    <property type="match status" value="1"/>
</dbReference>
<dbReference type="PANTHER" id="PTHR10680">
    <property type="entry name" value="PEPTIDYL-GLYCINE ALPHA-AMIDATING MONOOXYGENASE"/>
    <property type="match status" value="1"/>
</dbReference>
<dbReference type="Pfam" id="PF01436">
    <property type="entry name" value="NHL"/>
    <property type="match status" value="3"/>
</dbReference>
<dbReference type="PRINTS" id="PR00790">
    <property type="entry name" value="PAMONOXGNASE"/>
</dbReference>
<dbReference type="SUPFAM" id="SSF63829">
    <property type="entry name" value="Calcium-dependent phosphotriesterase"/>
    <property type="match status" value="1"/>
</dbReference>
<dbReference type="PROSITE" id="PS51125">
    <property type="entry name" value="NHL"/>
    <property type="match status" value="4"/>
</dbReference>
<reference key="1">
    <citation type="journal article" date="2000" name="Science">
        <title>The genome sequence of Drosophila melanogaster.</title>
        <authorList>
            <person name="Adams M.D."/>
            <person name="Celniker S.E."/>
            <person name="Holt R.A."/>
            <person name="Evans C.A."/>
            <person name="Gocayne J.D."/>
            <person name="Amanatides P.G."/>
            <person name="Scherer S.E."/>
            <person name="Li P.W."/>
            <person name="Hoskins R.A."/>
            <person name="Galle R.F."/>
            <person name="George R.A."/>
            <person name="Lewis S.E."/>
            <person name="Richards S."/>
            <person name="Ashburner M."/>
            <person name="Henderson S.N."/>
            <person name="Sutton G.G."/>
            <person name="Wortman J.R."/>
            <person name="Yandell M.D."/>
            <person name="Zhang Q."/>
            <person name="Chen L.X."/>
            <person name="Brandon R.C."/>
            <person name="Rogers Y.-H.C."/>
            <person name="Blazej R.G."/>
            <person name="Champe M."/>
            <person name="Pfeiffer B.D."/>
            <person name="Wan K.H."/>
            <person name="Doyle C."/>
            <person name="Baxter E.G."/>
            <person name="Helt G."/>
            <person name="Nelson C.R."/>
            <person name="Miklos G.L.G."/>
            <person name="Abril J.F."/>
            <person name="Agbayani A."/>
            <person name="An H.-J."/>
            <person name="Andrews-Pfannkoch C."/>
            <person name="Baldwin D."/>
            <person name="Ballew R.M."/>
            <person name="Basu A."/>
            <person name="Baxendale J."/>
            <person name="Bayraktaroglu L."/>
            <person name="Beasley E.M."/>
            <person name="Beeson K.Y."/>
            <person name="Benos P.V."/>
            <person name="Berman B.P."/>
            <person name="Bhandari D."/>
            <person name="Bolshakov S."/>
            <person name="Borkova D."/>
            <person name="Botchan M.R."/>
            <person name="Bouck J."/>
            <person name="Brokstein P."/>
            <person name="Brottier P."/>
            <person name="Burtis K.C."/>
            <person name="Busam D.A."/>
            <person name="Butler H."/>
            <person name="Cadieu E."/>
            <person name="Center A."/>
            <person name="Chandra I."/>
            <person name="Cherry J.M."/>
            <person name="Cawley S."/>
            <person name="Dahlke C."/>
            <person name="Davenport L.B."/>
            <person name="Davies P."/>
            <person name="de Pablos B."/>
            <person name="Delcher A."/>
            <person name="Deng Z."/>
            <person name="Mays A.D."/>
            <person name="Dew I."/>
            <person name="Dietz S.M."/>
            <person name="Dodson K."/>
            <person name="Doup L.E."/>
            <person name="Downes M."/>
            <person name="Dugan-Rocha S."/>
            <person name="Dunkov B.C."/>
            <person name="Dunn P."/>
            <person name="Durbin K.J."/>
            <person name="Evangelista C.C."/>
            <person name="Ferraz C."/>
            <person name="Ferriera S."/>
            <person name="Fleischmann W."/>
            <person name="Fosler C."/>
            <person name="Gabrielian A.E."/>
            <person name="Garg N.S."/>
            <person name="Gelbart W.M."/>
            <person name="Glasser K."/>
            <person name="Glodek A."/>
            <person name="Gong F."/>
            <person name="Gorrell J.H."/>
            <person name="Gu Z."/>
            <person name="Guan P."/>
            <person name="Harris M."/>
            <person name="Harris N.L."/>
            <person name="Harvey D.A."/>
            <person name="Heiman T.J."/>
            <person name="Hernandez J.R."/>
            <person name="Houck J."/>
            <person name="Hostin D."/>
            <person name="Houston K.A."/>
            <person name="Howland T.J."/>
            <person name="Wei M.-H."/>
            <person name="Ibegwam C."/>
            <person name="Jalali M."/>
            <person name="Kalush F."/>
            <person name="Karpen G.H."/>
            <person name="Ke Z."/>
            <person name="Kennison J.A."/>
            <person name="Ketchum K.A."/>
            <person name="Kimmel B.E."/>
            <person name="Kodira C.D."/>
            <person name="Kraft C.L."/>
            <person name="Kravitz S."/>
            <person name="Kulp D."/>
            <person name="Lai Z."/>
            <person name="Lasko P."/>
            <person name="Lei Y."/>
            <person name="Levitsky A.A."/>
            <person name="Li J.H."/>
            <person name="Li Z."/>
            <person name="Liang Y."/>
            <person name="Lin X."/>
            <person name="Liu X."/>
            <person name="Mattei B."/>
            <person name="McIntosh T.C."/>
            <person name="McLeod M.P."/>
            <person name="McPherson D."/>
            <person name="Merkulov G."/>
            <person name="Milshina N.V."/>
            <person name="Mobarry C."/>
            <person name="Morris J."/>
            <person name="Moshrefi A."/>
            <person name="Mount S.M."/>
            <person name="Moy M."/>
            <person name="Murphy B."/>
            <person name="Murphy L."/>
            <person name="Muzny D.M."/>
            <person name="Nelson D.L."/>
            <person name="Nelson D.R."/>
            <person name="Nelson K.A."/>
            <person name="Nixon K."/>
            <person name="Nusskern D.R."/>
            <person name="Pacleb J.M."/>
            <person name="Palazzolo M."/>
            <person name="Pittman G.S."/>
            <person name="Pan S."/>
            <person name="Pollard J."/>
            <person name="Puri V."/>
            <person name="Reese M.G."/>
            <person name="Reinert K."/>
            <person name="Remington K."/>
            <person name="Saunders R.D.C."/>
            <person name="Scheeler F."/>
            <person name="Shen H."/>
            <person name="Shue B.C."/>
            <person name="Siden-Kiamos I."/>
            <person name="Simpson M."/>
            <person name="Skupski M.P."/>
            <person name="Smith T.J."/>
            <person name="Spier E."/>
            <person name="Spradling A.C."/>
            <person name="Stapleton M."/>
            <person name="Strong R."/>
            <person name="Sun E."/>
            <person name="Svirskas R."/>
            <person name="Tector C."/>
            <person name="Turner R."/>
            <person name="Venter E."/>
            <person name="Wang A.H."/>
            <person name="Wang X."/>
            <person name="Wang Z.-Y."/>
            <person name="Wassarman D.A."/>
            <person name="Weinstock G.M."/>
            <person name="Weissenbach J."/>
            <person name="Williams S.M."/>
            <person name="Woodage T."/>
            <person name="Worley K.C."/>
            <person name="Wu D."/>
            <person name="Yang S."/>
            <person name="Yao Q.A."/>
            <person name="Ye J."/>
            <person name="Yeh R.-F."/>
            <person name="Zaveri J.S."/>
            <person name="Zhan M."/>
            <person name="Zhang G."/>
            <person name="Zhao Q."/>
            <person name="Zheng L."/>
            <person name="Zheng X.H."/>
            <person name="Zhong F.N."/>
            <person name="Zhong W."/>
            <person name="Zhou X."/>
            <person name="Zhu S.C."/>
            <person name="Zhu X."/>
            <person name="Smith H.O."/>
            <person name="Gibbs R.A."/>
            <person name="Myers E.W."/>
            <person name="Rubin G.M."/>
            <person name="Venter J.C."/>
        </authorList>
    </citation>
    <scope>NUCLEOTIDE SEQUENCE [LARGE SCALE GENOMIC DNA]</scope>
    <source>
        <strain>Berkeley</strain>
    </source>
</reference>
<reference key="2">
    <citation type="journal article" date="2002" name="Genome Biol.">
        <title>Annotation of the Drosophila melanogaster euchromatic genome: a systematic review.</title>
        <authorList>
            <person name="Misra S."/>
            <person name="Crosby M.A."/>
            <person name="Mungall C.J."/>
            <person name="Matthews B.B."/>
            <person name="Campbell K.S."/>
            <person name="Hradecky P."/>
            <person name="Huang Y."/>
            <person name="Kaminker J.S."/>
            <person name="Millburn G.H."/>
            <person name="Prochnik S.E."/>
            <person name="Smith C.D."/>
            <person name="Tupy J.L."/>
            <person name="Whitfield E.J."/>
            <person name="Bayraktaroglu L."/>
            <person name="Berman B.P."/>
            <person name="Bettencourt B.R."/>
            <person name="Celniker S.E."/>
            <person name="de Grey A.D.N.J."/>
            <person name="Drysdale R.A."/>
            <person name="Harris N.L."/>
            <person name="Richter J."/>
            <person name="Russo S."/>
            <person name="Schroeder A.J."/>
            <person name="Shu S.Q."/>
            <person name="Stapleton M."/>
            <person name="Yamada C."/>
            <person name="Ashburner M."/>
            <person name="Gelbart W.M."/>
            <person name="Rubin G.M."/>
            <person name="Lewis S.E."/>
        </authorList>
    </citation>
    <scope>GENOME REANNOTATION</scope>
    <source>
        <strain>Berkeley</strain>
    </source>
</reference>
<reference key="3">
    <citation type="journal article" date="2002" name="Genome Biol.">
        <title>A Drosophila full-length cDNA resource.</title>
        <authorList>
            <person name="Stapleton M."/>
            <person name="Carlson J.W."/>
            <person name="Brokstein P."/>
            <person name="Yu C."/>
            <person name="Champe M."/>
            <person name="George R.A."/>
            <person name="Guarin H."/>
            <person name="Kronmiller B."/>
            <person name="Pacleb J.M."/>
            <person name="Park S."/>
            <person name="Wan K.H."/>
            <person name="Rubin G.M."/>
            <person name="Celniker S.E."/>
        </authorList>
    </citation>
    <scope>NUCLEOTIDE SEQUENCE [LARGE SCALE MRNA]</scope>
    <source>
        <strain>Berkeley</strain>
        <tissue>Embryo</tissue>
    </source>
</reference>
<reference key="4">
    <citation type="journal article" date="2004" name="J. Neurochem.">
        <title>Drosophila uses two distinct neuropeptide amidating enzymes, dPAL1 and dPAL2.</title>
        <authorList>
            <person name="Han M."/>
            <person name="Park D."/>
            <person name="Vanderzalm P.J."/>
            <person name="Mains R.E."/>
            <person name="Eipper B.A."/>
            <person name="Taghert P.H."/>
        </authorList>
    </citation>
    <scope>FUNCTION</scope>
    <scope>CATALYTIC ACTIVITY</scope>
    <scope>BIOPHYSICOCHEMICAL PROPERTIES</scope>
    <scope>SUBCELLULAR LOCATION</scope>
    <scope>GLYCOSYLATION</scope>
    <scope>TISSUE SPECIFICITY</scope>
</reference>
<organism>
    <name type="scientific">Drosophila melanogaster</name>
    <name type="common">Fruit fly</name>
    <dbReference type="NCBI Taxonomy" id="7227"/>
    <lineage>
        <taxon>Eukaryota</taxon>
        <taxon>Metazoa</taxon>
        <taxon>Ecdysozoa</taxon>
        <taxon>Arthropoda</taxon>
        <taxon>Hexapoda</taxon>
        <taxon>Insecta</taxon>
        <taxon>Pterygota</taxon>
        <taxon>Neoptera</taxon>
        <taxon>Endopterygota</taxon>
        <taxon>Diptera</taxon>
        <taxon>Brachycera</taxon>
        <taxon>Muscomorpha</taxon>
        <taxon>Ephydroidea</taxon>
        <taxon>Drosophilidae</taxon>
        <taxon>Drosophila</taxon>
        <taxon>Sophophora</taxon>
    </lineage>
</organism>
<gene>
    <name type="primary">Pal1</name>
    <name type="ORF">CG12130</name>
</gene>
<keyword id="KW-1003">Cell membrane</keyword>
<keyword id="KW-1015">Disulfide bond</keyword>
<keyword id="KW-0325">Glycoprotein</keyword>
<keyword id="KW-0456">Lyase</keyword>
<keyword id="KW-0472">Membrane</keyword>
<keyword id="KW-0479">Metal-binding</keyword>
<keyword id="KW-1185">Reference proteome</keyword>
<keyword id="KW-0677">Repeat</keyword>
<keyword id="KW-0732">Signal</keyword>
<keyword id="KW-0812">Transmembrane</keyword>
<keyword id="KW-1133">Transmembrane helix</keyword>
<keyword id="KW-0862">Zinc</keyword>
<sequence>MKSTDSAKCLGSKSLAICCLLLHLLLCIRPAVSQTQSPQRYLHNVDSNSNNNERLHQILKGSGAGSGATQLNWPQPPKQTVPNVKTELAKLNNTYVYQNAWPANNVKLGAVTAVSFDKAGNVVIFHRVNRVWGQTTFDNRNQYQEKYRGPIRESTILALEPATGKVQYDWGKNFFYMPHGLTVDPEDNVWLTDVAMHQVFKFPPRGGDGKPALTLGDAFQPGSGRKFCKPTSVAVLDNGDFFVADGYCNARILKYSRKGELILFWGQNTFSGISYDVAPQNFFAIPHALTLVPELQLLCAADRENGRVQCFLSSNGTFHSQYHNQLIGDRLFSMAYTPAAGGQLVIVNGPTAELGIHPEHYNEVHGFVLSMRSKQLVSKFGPNNLQFQNPHDVAVTADGNEIYVAELNPMRIHKFVHRSLAKPMSLSASKDSRDSAISQAVGGDQVPAVAVHHPSGKAILVASLMLLFAGSTFALALIFARRRKRGCLPFGARGRRHAWEKSDGFKLGGLLDRDRNGFEKLDQQASDEEQETKTLASAQYA</sequence>
<protein>
    <recommendedName>
        <fullName>Peptidyl-alpha-hydroxyglycine alpha-amidating lyase 1</fullName>
        <ecNumber evidence="4">4.3.2.5</ecNumber>
    </recommendedName>
    <alternativeName>
        <fullName>Peptidylamidoglycolate lyase 1</fullName>
    </alternativeName>
    <alternativeName>
        <fullName evidence="5">dPAL1</fullName>
    </alternativeName>
</protein>
<name>PAL1_DROME</name>
<feature type="signal peptide" evidence="2">
    <location>
        <begin position="1"/>
        <end position="33"/>
    </location>
</feature>
<feature type="chain" id="PRO_0000248573" description="Peptidyl-alpha-hydroxyglycine alpha-amidating lyase 1">
    <location>
        <begin position="34"/>
        <end position="541"/>
    </location>
</feature>
<feature type="topological domain" description="Extracellular" evidence="2">
    <location>
        <begin position="34"/>
        <end position="458"/>
    </location>
</feature>
<feature type="transmembrane region" description="Helical" evidence="2">
    <location>
        <begin position="459"/>
        <end position="479"/>
    </location>
</feature>
<feature type="topological domain" description="Cytoplasmic" evidence="2">
    <location>
        <begin position="480"/>
        <end position="541"/>
    </location>
</feature>
<feature type="repeat" description="NHL 1">
    <location>
        <begin position="164"/>
        <end position="205"/>
    </location>
</feature>
<feature type="repeat" description="NHL 2">
    <location>
        <begin position="215"/>
        <end position="258"/>
    </location>
</feature>
<feature type="repeat" description="NHL 3">
    <location>
        <begin position="272"/>
        <end position="314"/>
    </location>
</feature>
<feature type="repeat" description="NHL 4">
    <location>
        <begin position="374"/>
        <end position="418"/>
    </location>
</feature>
<feature type="region of interest" description="Disordered" evidence="3">
    <location>
        <begin position="521"/>
        <end position="541"/>
    </location>
</feature>
<feature type="glycosylation site" description="N-linked (GlcNAc...) asparagine" evidence="2">
    <location>
        <position position="92"/>
    </location>
</feature>
<feature type="glycosylation site" description="N-linked (GlcNAc...) asparagine" evidence="2">
    <location>
        <position position="315"/>
    </location>
</feature>
<feature type="disulfide bond" evidence="1">
    <location>
        <begin position="228"/>
        <end position="248"/>
    </location>
</feature>
<feature type="disulfide bond" evidence="1">
    <location>
        <begin position="299"/>
        <end position="310"/>
    </location>
</feature>
<feature type="sequence conflict" description="In Ref. 3; AAK93266." evidence="6" ref="3">
    <original>L</original>
    <variation>F</variation>
    <location>
        <position position="253"/>
    </location>
</feature>